<comment type="function">
    <text evidence="1 3">Effector protein involved in gene-for-gene resistance in tomato plants. It is recognized by the host Pto resistance protein and elicits Pto and Prf-dependent hypersensitive response (HR) and programmed cell death (PCD), resulting in host immunity. In susceptible plants, acts as a virulence factor by suppressing PCD and HR-based plant immunity. This function requires its E3 ubiquitin ligase activity probably by recruiting E2 enzymes and transferring ubiquitin molecules to cellular proteins involved in regulation of PCD and targeting them for degradation (By similarity). Enhances the development of disease symptoms and bacterial growth.</text>
</comment>
<comment type="subunit">
    <text>Interacts physically with plant cell Pto.</text>
</comment>
<comment type="subcellular location">
    <subcellularLocation>
        <location>Secreted</location>
    </subcellularLocation>
    <text>Secreted via type III secretion system (T3SS). Localized to the plant cell cytoplasm.</text>
</comment>
<comment type="PTM">
    <text evidence="1">Auto-ubiquitinated.</text>
</comment>
<comment type="miscellaneous">
    <text>Unlike many effector proteins, it is widely conserved among diverse genera of plant pathogens including Xanthomonas, Erwinia and many strains of Pseudomonas.</text>
</comment>
<comment type="similarity">
    <text evidence="4">Belongs to the HopAB family.</text>
</comment>
<reference key="1">
    <citation type="journal article" date="2006" name="Appl. Environ. Microbiol.">
        <title>Diverse AvrPtoB homologs from several Pseudomonas syringae pathovars elicit Pto-dependent resistance and have similar virulence activities.</title>
        <authorList>
            <person name="Lin N.-C."/>
            <person name="Abramovitch R.B."/>
            <person name="Kim Y.-J."/>
            <person name="Martin G.B."/>
        </authorList>
    </citation>
    <scope>NUCLEOTIDE SEQUENCE [GENOMIC DNA]</scope>
    <scope>FUNCTION IN VIRULENCE AND AVIRULENCE</scope>
    <source>
        <strain>JL1065</strain>
        <strain>PT23</strain>
        <strain>T1</strain>
    </source>
</reference>
<sequence length="579" mass="61819">MAGINGAGPSGAYFVGHTDPEPASGGAHGSSSGASSSNSPRLPAPPDAPASQARDRREMLLRARPLSRQTREWVAQGMPPTAEAGVPIRPQESAEAAAPQARAEERHTPEADAAASHVRTEGGRTPQALAGTSPRHTGAVPHANRIVQQLVDAGADLAGINTMIDNAMRRHAIALPSRTVQSILIEHFPHLLAGELISGSELATAFRAALRREVRQQEASAPPRTAARSSVRTPERSTVPPTSTESSSGSNQRTLLGRFAGLMTPNQRRPSSASNASASQRPVDRSPPRVNQVPTGANRVVMRNHGNNEADAALQGLAQQGVDMEDLRAALERHILHRRPIPMDIAYALQGVGIAPSIDTGESLMENPLMNLSVALHRALGPRPARAQAPRPAVPVAPATVSRRPDSARATRLQVIPAREDYENNVAYGVRLLSLNPGAGVRETVAAFVNNRYERQAVVADIRAALNLSKQFNKLRTVSKADAASNKPGFKDLADHPDDATQCLFGEELSLTSSVQQVIGLAGKATDMSESYSREANKDLVFMDMKKLAQFLAGKPEHPMTRETLNAENIAKYAFRIVP</sequence>
<accession>Q2QCI9</accession>
<accession>Q2QCJ1</accession>
<name>HPAB3_PSEUB</name>
<gene>
    <name type="primary">hopAB3</name>
    <name type="synonym">avrPtoB</name>
</gene>
<dbReference type="EC" id="2.3.2.-"/>
<dbReference type="EMBL" id="DQ133535">
    <property type="protein sequence ID" value="ABA00713.1"/>
    <property type="molecule type" value="Genomic_DNA"/>
</dbReference>
<dbReference type="EMBL" id="DQ133534">
    <property type="protein sequence ID" value="ABA00712.1"/>
    <property type="molecule type" value="Genomic_DNA"/>
</dbReference>
<dbReference type="EMBL" id="DQ133533">
    <property type="protein sequence ID" value="ABA00711.1"/>
    <property type="molecule type" value="Genomic_DNA"/>
</dbReference>
<dbReference type="SMR" id="Q2QCI9"/>
<dbReference type="PHI-base" id="PHI:8098"/>
<dbReference type="GO" id="GO:0005576">
    <property type="term" value="C:extracellular region"/>
    <property type="evidence" value="ECO:0007669"/>
    <property type="project" value="UniProtKB-SubCell"/>
</dbReference>
<dbReference type="GO" id="GO:0016740">
    <property type="term" value="F:transferase activity"/>
    <property type="evidence" value="ECO:0007669"/>
    <property type="project" value="UniProtKB-KW"/>
</dbReference>
<dbReference type="GO" id="GO:0052040">
    <property type="term" value="P:symbiont-mediated perturbation of host programmed cell death"/>
    <property type="evidence" value="ECO:0007669"/>
    <property type="project" value="UniProtKB-KW"/>
</dbReference>
<dbReference type="CDD" id="cd12803">
    <property type="entry name" value="HopAB_BID"/>
    <property type="match status" value="1"/>
</dbReference>
<dbReference type="CDD" id="cd12802">
    <property type="entry name" value="HopAB_PID"/>
    <property type="match status" value="1"/>
</dbReference>
<dbReference type="Gene3D" id="1.20.1280.110">
    <property type="match status" value="1"/>
</dbReference>
<dbReference type="Gene3D" id="3.30.40.110">
    <property type="entry name" value="AvrPtoB, C-terminal domain"/>
    <property type="match status" value="1"/>
</dbReference>
<dbReference type="Gene3D" id="1.20.1280.220">
    <property type="entry name" value="Effector protein HopAB, BAK1-interacting domain"/>
    <property type="match status" value="1"/>
</dbReference>
<dbReference type="InterPro" id="IPR015133">
    <property type="entry name" value="E3_ubiquit_lig_AvrPtoB"/>
</dbReference>
<dbReference type="InterPro" id="IPR031759">
    <property type="entry name" value="HopAB_BAK-bd"/>
</dbReference>
<dbReference type="InterPro" id="IPR038342">
    <property type="entry name" value="HopAB_BAK-bd_sf"/>
</dbReference>
<dbReference type="InterPro" id="IPR038448">
    <property type="entry name" value="HopAB_E3_ubiquit_lig_sf"/>
</dbReference>
<dbReference type="InterPro" id="IPR033743">
    <property type="entry name" value="HopAB_PID"/>
</dbReference>
<dbReference type="Pfam" id="PF09046">
    <property type="entry name" value="AvrPtoB-E3_ubiq"/>
    <property type="match status" value="1"/>
</dbReference>
<dbReference type="Pfam" id="PF16847">
    <property type="entry name" value="AvrPtoB_bdg"/>
    <property type="match status" value="1"/>
</dbReference>
<organism>
    <name type="scientific">Pseudomonas syringae pv. tomato</name>
    <dbReference type="NCBI Taxonomy" id="323"/>
    <lineage>
        <taxon>Bacteria</taxon>
        <taxon>Pseudomonadati</taxon>
        <taxon>Pseudomonadota</taxon>
        <taxon>Gammaproteobacteria</taxon>
        <taxon>Pseudomonadales</taxon>
        <taxon>Pseudomonadaceae</taxon>
        <taxon>Pseudomonas</taxon>
    </lineage>
</organism>
<feature type="chain" id="PRO_0000234082" description="Effector protein HopAB3">
    <location>
        <begin position="1"/>
        <end position="579"/>
    </location>
</feature>
<feature type="region of interest" description="Host recognition; Pto interaction" evidence="1">
    <location>
        <begin position="1"/>
        <end position="336"/>
    </location>
</feature>
<feature type="region of interest" description="Disordered" evidence="2">
    <location>
        <begin position="1"/>
        <end position="140"/>
    </location>
</feature>
<feature type="region of interest" description="Disordered" evidence="2">
    <location>
        <begin position="214"/>
        <end position="294"/>
    </location>
</feature>
<feature type="region of interest" description="E3 ubiquitin-protein ligase" evidence="1">
    <location>
        <begin position="337"/>
        <end position="579"/>
    </location>
</feature>
<feature type="region of interest" description="Disordered" evidence="2">
    <location>
        <begin position="384"/>
        <end position="408"/>
    </location>
</feature>
<feature type="compositionally biased region" description="Low complexity" evidence="2">
    <location>
        <begin position="23"/>
        <end position="39"/>
    </location>
</feature>
<feature type="compositionally biased region" description="Low complexity" evidence="2">
    <location>
        <begin position="89"/>
        <end position="101"/>
    </location>
</feature>
<feature type="compositionally biased region" description="Low complexity" evidence="2">
    <location>
        <begin position="219"/>
        <end position="248"/>
    </location>
</feature>
<feature type="compositionally biased region" description="Low complexity" evidence="2">
    <location>
        <begin position="266"/>
        <end position="281"/>
    </location>
</feature>
<feature type="compositionally biased region" description="Low complexity" evidence="2">
    <location>
        <begin position="384"/>
        <end position="402"/>
    </location>
</feature>
<feature type="sequence variant" description="In strain: T1.">
    <original>S</original>
    <variation>R</variation>
    <location>
        <position position="35"/>
    </location>
</feature>
<feature type="sequence variant" description="In strain: T1.">
    <original>L</original>
    <variation>A</variation>
    <location>
        <position position="493"/>
    </location>
</feature>
<feature type="sequence variant" description="In strain: T1.">
    <original>V</original>
    <variation>D</variation>
    <location>
        <position position="515"/>
    </location>
</feature>
<proteinExistence type="evidence at protein level"/>
<evidence type="ECO:0000250" key="1"/>
<evidence type="ECO:0000256" key="2">
    <source>
        <dbReference type="SAM" id="MobiDB-lite"/>
    </source>
</evidence>
<evidence type="ECO:0000269" key="3">
    <source>
    </source>
</evidence>
<evidence type="ECO:0000305" key="4"/>
<keyword id="KW-0928">Hypersensitive response elicitation</keyword>
<keyword id="KW-0964">Secreted</keyword>
<keyword id="KW-0808">Transferase</keyword>
<keyword id="KW-0832">Ubl conjugation</keyword>
<keyword id="KW-0833">Ubl conjugation pathway</keyword>
<keyword id="KW-0843">Virulence</keyword>
<protein>
    <recommendedName>
        <fullName>Effector protein HopAB3</fullName>
    </recommendedName>
    <alternativeName>
        <fullName>Avirulence protein AvrPtoB</fullName>
    </alternativeName>
    <domain>
        <recommendedName>
            <fullName>E3 ubiquitin-protein ligase</fullName>
            <ecNumber>2.3.2.-</ecNumber>
        </recommendedName>
        <alternativeName>
            <fullName evidence="4">E3 ubiquitin-protein transferase</fullName>
        </alternativeName>
    </domain>
</protein>